<evidence type="ECO:0000250" key="1">
    <source>
        <dbReference type="UniProtKB" id="P74334"/>
    </source>
</evidence>
<evidence type="ECO:0000269" key="2">
    <source>
    </source>
</evidence>
<evidence type="ECO:0000303" key="3">
    <source>
    </source>
</evidence>
<evidence type="ECO:0000305" key="4"/>
<accession>A5HV13</accession>
<name>IEMOX_PSEPU</name>
<dbReference type="EC" id="1.13.11.88" evidence="2"/>
<dbReference type="EMBL" id="AB291707">
    <property type="protein sequence ID" value="BAF62888.1"/>
    <property type="molecule type" value="Genomic_DNA"/>
</dbReference>
<dbReference type="SMR" id="A5HV13"/>
<dbReference type="KEGG" id="ag:BAF62888"/>
<dbReference type="BRENDA" id="1.13.11.88">
    <property type="organism ID" value="5092"/>
</dbReference>
<dbReference type="GO" id="GO:0010436">
    <property type="term" value="F:carotenoid dioxygenase activity"/>
    <property type="evidence" value="ECO:0007669"/>
    <property type="project" value="TreeGrafter"/>
</dbReference>
<dbReference type="GO" id="GO:0046872">
    <property type="term" value="F:metal ion binding"/>
    <property type="evidence" value="ECO:0007669"/>
    <property type="project" value="UniProtKB-KW"/>
</dbReference>
<dbReference type="GO" id="GO:0004497">
    <property type="term" value="F:monooxygenase activity"/>
    <property type="evidence" value="ECO:0007669"/>
    <property type="project" value="UniProtKB-KW"/>
</dbReference>
<dbReference type="GO" id="GO:0016121">
    <property type="term" value="P:carotene catabolic process"/>
    <property type="evidence" value="ECO:0007669"/>
    <property type="project" value="TreeGrafter"/>
</dbReference>
<dbReference type="InterPro" id="IPR004294">
    <property type="entry name" value="Carotenoid_Oase"/>
</dbReference>
<dbReference type="PANTHER" id="PTHR10543">
    <property type="entry name" value="BETA-CAROTENE DIOXYGENASE"/>
    <property type="match status" value="1"/>
</dbReference>
<dbReference type="PANTHER" id="PTHR10543:SF89">
    <property type="entry name" value="CAROTENOID 9,10(9',10')-CLEAVAGE DIOXYGENASE 1"/>
    <property type="match status" value="1"/>
</dbReference>
<dbReference type="Pfam" id="PF03055">
    <property type="entry name" value="RPE65"/>
    <property type="match status" value="1"/>
</dbReference>
<proteinExistence type="evidence at protein level"/>
<feature type="chain" id="PRO_0000457755" description="Isoeugenol monooxygenase">
    <location>
        <begin position="1"/>
        <end position="478"/>
    </location>
</feature>
<feature type="binding site" evidence="1">
    <location>
        <position position="167"/>
    </location>
    <ligand>
        <name>Fe cation</name>
        <dbReference type="ChEBI" id="CHEBI:24875"/>
        <note>catalytic</note>
    </ligand>
</feature>
<feature type="binding site" evidence="1">
    <location>
        <position position="218"/>
    </location>
    <ligand>
        <name>Fe cation</name>
        <dbReference type="ChEBI" id="CHEBI:24875"/>
        <note>catalytic</note>
    </ligand>
</feature>
<feature type="binding site" evidence="1">
    <location>
        <position position="282"/>
    </location>
    <ligand>
        <name>Fe cation</name>
        <dbReference type="ChEBI" id="CHEBI:24875"/>
        <note>catalytic</note>
    </ligand>
</feature>
<feature type="binding site" evidence="1">
    <location>
        <position position="471"/>
    </location>
    <ligand>
        <name>Fe cation</name>
        <dbReference type="ChEBI" id="CHEBI:24875"/>
        <note>catalytic</note>
    </ligand>
</feature>
<organism>
    <name type="scientific">Pseudomonas putida</name>
    <name type="common">Arthrobacter siderocapsulatus</name>
    <dbReference type="NCBI Taxonomy" id="303"/>
    <lineage>
        <taxon>Bacteria</taxon>
        <taxon>Pseudomonadati</taxon>
        <taxon>Pseudomonadota</taxon>
        <taxon>Gammaproteobacteria</taxon>
        <taxon>Pseudomonadales</taxon>
        <taxon>Pseudomonadaceae</taxon>
        <taxon>Pseudomonas</taxon>
    </lineage>
</organism>
<protein>
    <recommendedName>
        <fullName evidence="4">Isoeugenol monooxygenase</fullName>
        <ecNumber evidence="2">1.13.11.88</ecNumber>
    </recommendedName>
    <alternativeName>
        <fullName evidence="3">Isoeugenol-degrading enzyme</fullName>
    </alternativeName>
</protein>
<gene>
    <name evidence="3" type="primary">iso</name>
</gene>
<reference key="1">
    <citation type="journal article" date="2007" name="Arch. Microbiol.">
        <title>Purification, characterization and gene cloning of isoeugenol-degrading enzyme from Pseudomonas putida IE27.</title>
        <authorList>
            <person name="Yamada M."/>
            <person name="Okada Y."/>
            <person name="Yoshida T."/>
            <person name="Nagasawa T."/>
        </authorList>
    </citation>
    <scope>NUCLEOTIDE SEQUENCE [GENOMIC DNA]</scope>
    <scope>PROTEIN SEQUENCE OF 2-23</scope>
    <scope>FUNCTION</scope>
    <scope>CATALYTIC ACTIVITY</scope>
    <scope>ACTIVITY REGULATION</scope>
    <scope>BIOPHYSICOCHEMICAL PROPERTIES</scope>
    <scope>SUBUNIT</scope>
    <source>
        <strain>IE27</strain>
    </source>
</reference>
<keyword id="KW-0903">Direct protein sequencing</keyword>
<keyword id="KW-0408">Iron</keyword>
<keyword id="KW-0479">Metal-binding</keyword>
<keyword id="KW-0503">Monooxygenase</keyword>
<keyword id="KW-0560">Oxidoreductase</keyword>
<comment type="function">
    <text evidence="2">Involved in isoeugenol degradation (PubMed:17516050). Catalyzes the oxidative cleavage of the side chain double-bond of isoeugenol to form vanillin and acetaldehyde (PubMed:17516050).</text>
</comment>
<comment type="catalytic activity">
    <reaction evidence="2">
        <text>(E)-isoeugenol + O2 = vanillin + acetaldehyde</text>
        <dbReference type="Rhea" id="RHEA:58068"/>
        <dbReference type="ChEBI" id="CHEBI:15343"/>
        <dbReference type="ChEBI" id="CHEBI:15379"/>
        <dbReference type="ChEBI" id="CHEBI:18346"/>
        <dbReference type="ChEBI" id="CHEBI:50545"/>
        <dbReference type="EC" id="1.13.11.88"/>
    </reaction>
    <physiologicalReaction direction="left-to-right" evidence="2">
        <dbReference type="Rhea" id="RHEA:58069"/>
    </physiologicalReaction>
</comment>
<comment type="cofactor">
    <cofactor evidence="1">
        <name>Fe(2+)</name>
        <dbReference type="ChEBI" id="CHEBI:29033"/>
    </cofactor>
    <text evidence="1">1 Fe(2+) ion per subunit.</text>
</comment>
<comment type="activity regulation">
    <text evidence="2">Inhibited by HgCl(2), AgNO(3), CuCl(2), phenylhydrazine, 8-hydroxyquinoline, R-cycloserine and p-chloromercuribenzoic acid.</text>
</comment>
<comment type="biophysicochemical properties">
    <kinetics>
        <KM evidence="2">175 uM for isoeugenol</KM>
        <text evidence="2">kcat is 5.18 sec(-1).</text>
    </kinetics>
    <phDependence>
        <text evidence="2">Optimum pH is 9.0.</text>
    </phDependence>
    <temperatureDependence>
        <text evidence="2">Optimum temperature is 30 degrees Celsius.</text>
    </temperatureDependence>
</comment>
<comment type="subunit">
    <text evidence="2">Monomer.</text>
</comment>
<comment type="similarity">
    <text evidence="4">Belongs to the carotenoid oxygenase family.</text>
</comment>
<sequence length="478" mass="54809">MATFDRNDPQLAGTMFPTRIEANVFDLEIEGEIPRAINGSFFRNTPEPQVTTQPFHTFIDGDGLASAFHFEDGQVDFVSRWVCTPRFEAERSARKSLFGMYRNPFTDDPSVEGIDRTVANTSIITHHGKVLAAKEDGLPYELDPQTLETRGRYDYKGQVTSHTHTAHPKFDPQTGEMLLFGSAAKGERTLDMAYYIVDRYGKVTHETWFKQPYGAFMHDFAVTRNWSIFPIMPATNSLERLKAKQPIYMWEPERGSYIGVLPRRGQGKDIRWFRAPALWVFHVVNAWEEGNRILIDLMESEILPFPFPNSQNLPFDPSKAVPRLTRWEIDLNSGNDEMKRTQLHEYFAEMPIMDFRFALQDHRYAYMGVDDPRRPLAHQQAEKIFAYNSLGVWDNHRKDYELWFTGKMSAAQEPAFVPRSPDAPEGDGYLLSVVGRLDEDRSDLVILDTQCLAAGPVATVKLPFRLRAALHGCWQSKN</sequence>